<proteinExistence type="inferred from homology"/>
<feature type="chain" id="PRO_0000360527" description="Uncharacterized oxidoreductase YesF">
    <location>
        <begin position="1"/>
        <end position="286"/>
    </location>
</feature>
<gene>
    <name type="primary">yesF</name>
    <name type="synonym">yeeM</name>
    <name type="synonym">yfxB</name>
    <name type="ordered locus">BSU06880</name>
</gene>
<comment type="similarity">
    <text evidence="1">Belongs to the NmrA-type oxidoreductase family.</text>
</comment>
<keyword id="KW-0560">Oxidoreductase</keyword>
<keyword id="KW-1185">Reference proteome</keyword>
<evidence type="ECO:0000305" key="1"/>
<sequence>MMKQNPILITGGTGTVGSRIASRLIKLGYRVRIASRKKGALADAEYVYFNWKYASSFTPALEQVKQIYLVAPVGVFDPAPYVLPFLKEAKRLGAKRVVMQSASVVSENGPVFGALHQAVREFPEWTVLRPSYFMQNFINVQHRMSIQTEGRITTASGEGKLGFIDADDIAETAVRALIDDVPHQTHHILTGPEALSYAEAAEIIGAAAGRRVEHVSISRSELQHKMEAGGLPADYAHFMAKLDEAISHGAEHRVTDTVKRVTGKEPRSLSEFAAAHAAYWTSFWTE</sequence>
<protein>
    <recommendedName>
        <fullName>Uncharacterized oxidoreductase YesF</fullName>
        <ecNumber>1.-.-.-</ecNumber>
    </recommendedName>
</protein>
<name>YESF_BACSU</name>
<organism>
    <name type="scientific">Bacillus subtilis (strain 168)</name>
    <dbReference type="NCBI Taxonomy" id="224308"/>
    <lineage>
        <taxon>Bacteria</taxon>
        <taxon>Bacillati</taxon>
        <taxon>Bacillota</taxon>
        <taxon>Bacilli</taxon>
        <taxon>Bacillales</taxon>
        <taxon>Bacillaceae</taxon>
        <taxon>Bacillus</taxon>
    </lineage>
</organism>
<accession>O31512</accession>
<reference key="1">
    <citation type="journal article" date="1997" name="Nature">
        <title>The complete genome sequence of the Gram-positive bacterium Bacillus subtilis.</title>
        <authorList>
            <person name="Kunst F."/>
            <person name="Ogasawara N."/>
            <person name="Moszer I."/>
            <person name="Albertini A.M."/>
            <person name="Alloni G."/>
            <person name="Azevedo V."/>
            <person name="Bertero M.G."/>
            <person name="Bessieres P."/>
            <person name="Bolotin A."/>
            <person name="Borchert S."/>
            <person name="Borriss R."/>
            <person name="Boursier L."/>
            <person name="Brans A."/>
            <person name="Braun M."/>
            <person name="Brignell S.C."/>
            <person name="Bron S."/>
            <person name="Brouillet S."/>
            <person name="Bruschi C.V."/>
            <person name="Caldwell B."/>
            <person name="Capuano V."/>
            <person name="Carter N.M."/>
            <person name="Choi S.-K."/>
            <person name="Codani J.-J."/>
            <person name="Connerton I.F."/>
            <person name="Cummings N.J."/>
            <person name="Daniel R.A."/>
            <person name="Denizot F."/>
            <person name="Devine K.M."/>
            <person name="Duesterhoeft A."/>
            <person name="Ehrlich S.D."/>
            <person name="Emmerson P.T."/>
            <person name="Entian K.-D."/>
            <person name="Errington J."/>
            <person name="Fabret C."/>
            <person name="Ferrari E."/>
            <person name="Foulger D."/>
            <person name="Fritz C."/>
            <person name="Fujita M."/>
            <person name="Fujita Y."/>
            <person name="Fuma S."/>
            <person name="Galizzi A."/>
            <person name="Galleron N."/>
            <person name="Ghim S.-Y."/>
            <person name="Glaser P."/>
            <person name="Goffeau A."/>
            <person name="Golightly E.J."/>
            <person name="Grandi G."/>
            <person name="Guiseppi G."/>
            <person name="Guy B.J."/>
            <person name="Haga K."/>
            <person name="Haiech J."/>
            <person name="Harwood C.R."/>
            <person name="Henaut A."/>
            <person name="Hilbert H."/>
            <person name="Holsappel S."/>
            <person name="Hosono S."/>
            <person name="Hullo M.-F."/>
            <person name="Itaya M."/>
            <person name="Jones L.-M."/>
            <person name="Joris B."/>
            <person name="Karamata D."/>
            <person name="Kasahara Y."/>
            <person name="Klaerr-Blanchard M."/>
            <person name="Klein C."/>
            <person name="Kobayashi Y."/>
            <person name="Koetter P."/>
            <person name="Koningstein G."/>
            <person name="Krogh S."/>
            <person name="Kumano M."/>
            <person name="Kurita K."/>
            <person name="Lapidus A."/>
            <person name="Lardinois S."/>
            <person name="Lauber J."/>
            <person name="Lazarevic V."/>
            <person name="Lee S.-M."/>
            <person name="Levine A."/>
            <person name="Liu H."/>
            <person name="Masuda S."/>
            <person name="Mauel C."/>
            <person name="Medigue C."/>
            <person name="Medina N."/>
            <person name="Mellado R.P."/>
            <person name="Mizuno M."/>
            <person name="Moestl D."/>
            <person name="Nakai S."/>
            <person name="Noback M."/>
            <person name="Noone D."/>
            <person name="O'Reilly M."/>
            <person name="Ogawa K."/>
            <person name="Ogiwara A."/>
            <person name="Oudega B."/>
            <person name="Park S.-H."/>
            <person name="Parro V."/>
            <person name="Pohl T.M."/>
            <person name="Portetelle D."/>
            <person name="Porwollik S."/>
            <person name="Prescott A.M."/>
            <person name="Presecan E."/>
            <person name="Pujic P."/>
            <person name="Purnelle B."/>
            <person name="Rapoport G."/>
            <person name="Rey M."/>
            <person name="Reynolds S."/>
            <person name="Rieger M."/>
            <person name="Rivolta C."/>
            <person name="Rocha E."/>
            <person name="Roche B."/>
            <person name="Rose M."/>
            <person name="Sadaie Y."/>
            <person name="Sato T."/>
            <person name="Scanlan E."/>
            <person name="Schleich S."/>
            <person name="Schroeter R."/>
            <person name="Scoffone F."/>
            <person name="Sekiguchi J."/>
            <person name="Sekowska A."/>
            <person name="Seror S.J."/>
            <person name="Serror P."/>
            <person name="Shin B.-S."/>
            <person name="Soldo B."/>
            <person name="Sorokin A."/>
            <person name="Tacconi E."/>
            <person name="Takagi T."/>
            <person name="Takahashi H."/>
            <person name="Takemaru K."/>
            <person name="Takeuchi M."/>
            <person name="Tamakoshi A."/>
            <person name="Tanaka T."/>
            <person name="Terpstra P."/>
            <person name="Tognoni A."/>
            <person name="Tosato V."/>
            <person name="Uchiyama S."/>
            <person name="Vandenbol M."/>
            <person name="Vannier F."/>
            <person name="Vassarotti A."/>
            <person name="Viari A."/>
            <person name="Wambutt R."/>
            <person name="Wedler E."/>
            <person name="Wedler H."/>
            <person name="Weitzenegger T."/>
            <person name="Winters P."/>
            <person name="Wipat A."/>
            <person name="Yamamoto H."/>
            <person name="Yamane K."/>
            <person name="Yasumoto K."/>
            <person name="Yata K."/>
            <person name="Yoshida K."/>
            <person name="Yoshikawa H.-F."/>
            <person name="Zumstein E."/>
            <person name="Yoshikawa H."/>
            <person name="Danchin A."/>
        </authorList>
    </citation>
    <scope>NUCLEOTIDE SEQUENCE [LARGE SCALE GENOMIC DNA]</scope>
    <source>
        <strain>168</strain>
    </source>
</reference>
<dbReference type="EC" id="1.-.-.-"/>
<dbReference type="EMBL" id="AL009126">
    <property type="protein sequence ID" value="CAB12507.1"/>
    <property type="molecule type" value="Genomic_DNA"/>
</dbReference>
<dbReference type="PIR" id="H69795">
    <property type="entry name" value="H69795"/>
</dbReference>
<dbReference type="RefSeq" id="NP_388569.1">
    <property type="nucleotide sequence ID" value="NC_000964.3"/>
</dbReference>
<dbReference type="RefSeq" id="WP_003243852.1">
    <property type="nucleotide sequence ID" value="NZ_OZ025638.1"/>
</dbReference>
<dbReference type="SMR" id="O31512"/>
<dbReference type="FunCoup" id="O31512">
    <property type="interactions" value="112"/>
</dbReference>
<dbReference type="STRING" id="224308.BSU06880"/>
<dbReference type="PaxDb" id="224308-BSU06880"/>
<dbReference type="DNASU" id="936067"/>
<dbReference type="EnsemblBacteria" id="CAB12507">
    <property type="protein sequence ID" value="CAB12507"/>
    <property type="gene ID" value="BSU_06880"/>
</dbReference>
<dbReference type="GeneID" id="936067"/>
<dbReference type="KEGG" id="bsu:BSU06880"/>
<dbReference type="PATRIC" id="fig|224308.179.peg.748"/>
<dbReference type="eggNOG" id="COG0702">
    <property type="taxonomic scope" value="Bacteria"/>
</dbReference>
<dbReference type="InParanoid" id="O31512"/>
<dbReference type="OrthoDB" id="339107at2"/>
<dbReference type="PhylomeDB" id="O31512"/>
<dbReference type="BioCyc" id="BSUB:BSU06880-MONOMER"/>
<dbReference type="Proteomes" id="UP000001570">
    <property type="component" value="Chromosome"/>
</dbReference>
<dbReference type="GO" id="GO:0016491">
    <property type="term" value="F:oxidoreductase activity"/>
    <property type="evidence" value="ECO:0007669"/>
    <property type="project" value="UniProtKB-KW"/>
</dbReference>
<dbReference type="CDD" id="cd05269">
    <property type="entry name" value="TMR_SDR_a"/>
    <property type="match status" value="1"/>
</dbReference>
<dbReference type="Gene3D" id="3.40.50.720">
    <property type="entry name" value="NAD(P)-binding Rossmann-like Domain"/>
    <property type="match status" value="1"/>
</dbReference>
<dbReference type="Gene3D" id="3.90.25.10">
    <property type="entry name" value="UDP-galactose 4-epimerase, domain 1"/>
    <property type="match status" value="1"/>
</dbReference>
<dbReference type="InterPro" id="IPR051604">
    <property type="entry name" value="Ergot_Alk_Oxidoreductase"/>
</dbReference>
<dbReference type="InterPro" id="IPR036291">
    <property type="entry name" value="NAD(P)-bd_dom_sf"/>
</dbReference>
<dbReference type="InterPro" id="IPR008030">
    <property type="entry name" value="NmrA-like"/>
</dbReference>
<dbReference type="PANTHER" id="PTHR43162">
    <property type="match status" value="1"/>
</dbReference>
<dbReference type="PANTHER" id="PTHR43162:SF1">
    <property type="entry name" value="PRESTALK A DIFFERENTIATION PROTEIN A"/>
    <property type="match status" value="1"/>
</dbReference>
<dbReference type="Pfam" id="PF05368">
    <property type="entry name" value="NmrA"/>
    <property type="match status" value="1"/>
</dbReference>
<dbReference type="SUPFAM" id="SSF51735">
    <property type="entry name" value="NAD(P)-binding Rossmann-fold domains"/>
    <property type="match status" value="1"/>
</dbReference>